<protein>
    <recommendedName>
        <fullName evidence="1">Small ribosomal subunit protein uS13</fullName>
    </recommendedName>
    <alternativeName>
        <fullName evidence="3">30S ribosomal protein S13</fullName>
    </alternativeName>
</protein>
<dbReference type="EMBL" id="BA000031">
    <property type="protein sequence ID" value="BAC58542.1"/>
    <property type="molecule type" value="Genomic_DNA"/>
</dbReference>
<dbReference type="RefSeq" id="NP_796658.1">
    <property type="nucleotide sequence ID" value="NC_004603.1"/>
</dbReference>
<dbReference type="RefSeq" id="WP_005450559.1">
    <property type="nucleotide sequence ID" value="NC_004603.1"/>
</dbReference>
<dbReference type="SMR" id="Q87SZ2"/>
<dbReference type="GeneID" id="97171203"/>
<dbReference type="KEGG" id="vpa:VP0279"/>
<dbReference type="PATRIC" id="fig|223926.6.peg.270"/>
<dbReference type="eggNOG" id="COG0099">
    <property type="taxonomic scope" value="Bacteria"/>
</dbReference>
<dbReference type="HOGENOM" id="CLU_103849_1_2_6"/>
<dbReference type="PRO" id="PR:Q87SZ2"/>
<dbReference type="Proteomes" id="UP000002493">
    <property type="component" value="Chromosome 1"/>
</dbReference>
<dbReference type="GO" id="GO:0005829">
    <property type="term" value="C:cytosol"/>
    <property type="evidence" value="ECO:0007669"/>
    <property type="project" value="TreeGrafter"/>
</dbReference>
<dbReference type="GO" id="GO:0015935">
    <property type="term" value="C:small ribosomal subunit"/>
    <property type="evidence" value="ECO:0007669"/>
    <property type="project" value="TreeGrafter"/>
</dbReference>
<dbReference type="GO" id="GO:0019843">
    <property type="term" value="F:rRNA binding"/>
    <property type="evidence" value="ECO:0007669"/>
    <property type="project" value="UniProtKB-UniRule"/>
</dbReference>
<dbReference type="GO" id="GO:0003735">
    <property type="term" value="F:structural constituent of ribosome"/>
    <property type="evidence" value="ECO:0007669"/>
    <property type="project" value="InterPro"/>
</dbReference>
<dbReference type="GO" id="GO:0000049">
    <property type="term" value="F:tRNA binding"/>
    <property type="evidence" value="ECO:0007669"/>
    <property type="project" value="UniProtKB-UniRule"/>
</dbReference>
<dbReference type="GO" id="GO:0006412">
    <property type="term" value="P:translation"/>
    <property type="evidence" value="ECO:0007669"/>
    <property type="project" value="UniProtKB-UniRule"/>
</dbReference>
<dbReference type="FunFam" id="1.10.8.50:FF:000001">
    <property type="entry name" value="30S ribosomal protein S13"/>
    <property type="match status" value="1"/>
</dbReference>
<dbReference type="FunFam" id="4.10.910.10:FF:000001">
    <property type="entry name" value="30S ribosomal protein S13"/>
    <property type="match status" value="1"/>
</dbReference>
<dbReference type="Gene3D" id="1.10.8.50">
    <property type="match status" value="1"/>
</dbReference>
<dbReference type="Gene3D" id="4.10.910.10">
    <property type="entry name" value="30s ribosomal protein s13, domain 2"/>
    <property type="match status" value="1"/>
</dbReference>
<dbReference type="HAMAP" id="MF_01315">
    <property type="entry name" value="Ribosomal_uS13"/>
    <property type="match status" value="1"/>
</dbReference>
<dbReference type="InterPro" id="IPR027437">
    <property type="entry name" value="Rbsml_uS13_C"/>
</dbReference>
<dbReference type="InterPro" id="IPR001892">
    <property type="entry name" value="Ribosomal_uS13"/>
</dbReference>
<dbReference type="InterPro" id="IPR010979">
    <property type="entry name" value="Ribosomal_uS13-like_H2TH"/>
</dbReference>
<dbReference type="InterPro" id="IPR019980">
    <property type="entry name" value="Ribosomal_uS13_bac-type"/>
</dbReference>
<dbReference type="InterPro" id="IPR018269">
    <property type="entry name" value="Ribosomal_uS13_CS"/>
</dbReference>
<dbReference type="NCBIfam" id="TIGR03631">
    <property type="entry name" value="uS13_bact"/>
    <property type="match status" value="1"/>
</dbReference>
<dbReference type="PANTHER" id="PTHR10871">
    <property type="entry name" value="30S RIBOSOMAL PROTEIN S13/40S RIBOSOMAL PROTEIN S18"/>
    <property type="match status" value="1"/>
</dbReference>
<dbReference type="PANTHER" id="PTHR10871:SF1">
    <property type="entry name" value="SMALL RIBOSOMAL SUBUNIT PROTEIN US13M"/>
    <property type="match status" value="1"/>
</dbReference>
<dbReference type="Pfam" id="PF00416">
    <property type="entry name" value="Ribosomal_S13"/>
    <property type="match status" value="1"/>
</dbReference>
<dbReference type="PIRSF" id="PIRSF002134">
    <property type="entry name" value="Ribosomal_S13"/>
    <property type="match status" value="1"/>
</dbReference>
<dbReference type="SUPFAM" id="SSF46946">
    <property type="entry name" value="S13-like H2TH domain"/>
    <property type="match status" value="1"/>
</dbReference>
<dbReference type="PROSITE" id="PS00646">
    <property type="entry name" value="RIBOSOMAL_S13_1"/>
    <property type="match status" value="1"/>
</dbReference>
<dbReference type="PROSITE" id="PS50159">
    <property type="entry name" value="RIBOSOMAL_S13_2"/>
    <property type="match status" value="1"/>
</dbReference>
<keyword id="KW-0687">Ribonucleoprotein</keyword>
<keyword id="KW-0689">Ribosomal protein</keyword>
<keyword id="KW-0694">RNA-binding</keyword>
<keyword id="KW-0699">rRNA-binding</keyword>
<keyword id="KW-0820">tRNA-binding</keyword>
<comment type="function">
    <text evidence="1">Located at the top of the head of the 30S subunit, it contacts several helices of the 16S rRNA. In the 70S ribosome it contacts the 23S rRNA (bridge B1a) and protein L5 of the 50S subunit (bridge B1b), connecting the 2 subunits; these bridges are implicated in subunit movement. Contacts the tRNAs in the A and P-sites.</text>
</comment>
<comment type="subunit">
    <text evidence="1">Part of the 30S ribosomal subunit. Forms a loose heterodimer with protein S19. Forms two bridges to the 50S subunit in the 70S ribosome.</text>
</comment>
<comment type="similarity">
    <text evidence="1">Belongs to the universal ribosomal protein uS13 family.</text>
</comment>
<name>RS13_VIBPA</name>
<sequence>MARIAGINIPDQKHAVIALTAIYGIGKTRSQAILAEVGIAEDVKISELTEEQIDQLRDGVAKYTVEGDLRREVSMNIKRLMDLGCYRGLRHRRSLPLRGQRTKTNARTRKGPRKPIKK</sequence>
<reference key="1">
    <citation type="journal article" date="2003" name="Lancet">
        <title>Genome sequence of Vibrio parahaemolyticus: a pathogenic mechanism distinct from that of V. cholerae.</title>
        <authorList>
            <person name="Makino K."/>
            <person name="Oshima K."/>
            <person name="Kurokawa K."/>
            <person name="Yokoyama K."/>
            <person name="Uda T."/>
            <person name="Tagomori K."/>
            <person name="Iijima Y."/>
            <person name="Najima M."/>
            <person name="Nakano M."/>
            <person name="Yamashita A."/>
            <person name="Kubota Y."/>
            <person name="Kimura S."/>
            <person name="Yasunaga T."/>
            <person name="Honda T."/>
            <person name="Shinagawa H."/>
            <person name="Hattori M."/>
            <person name="Iida T."/>
        </authorList>
    </citation>
    <scope>NUCLEOTIDE SEQUENCE [LARGE SCALE GENOMIC DNA]</scope>
    <source>
        <strain>RIMD 2210633</strain>
    </source>
</reference>
<evidence type="ECO:0000255" key="1">
    <source>
        <dbReference type="HAMAP-Rule" id="MF_01315"/>
    </source>
</evidence>
<evidence type="ECO:0000256" key="2">
    <source>
        <dbReference type="SAM" id="MobiDB-lite"/>
    </source>
</evidence>
<evidence type="ECO:0000305" key="3"/>
<feature type="chain" id="PRO_0000132167" description="Small ribosomal subunit protein uS13">
    <location>
        <begin position="1"/>
        <end position="118"/>
    </location>
</feature>
<feature type="region of interest" description="Disordered" evidence="2">
    <location>
        <begin position="94"/>
        <end position="118"/>
    </location>
</feature>
<accession>Q87SZ2</accession>
<organism>
    <name type="scientific">Vibrio parahaemolyticus serotype O3:K6 (strain RIMD 2210633)</name>
    <dbReference type="NCBI Taxonomy" id="223926"/>
    <lineage>
        <taxon>Bacteria</taxon>
        <taxon>Pseudomonadati</taxon>
        <taxon>Pseudomonadota</taxon>
        <taxon>Gammaproteobacteria</taxon>
        <taxon>Vibrionales</taxon>
        <taxon>Vibrionaceae</taxon>
        <taxon>Vibrio</taxon>
    </lineage>
</organism>
<gene>
    <name evidence="1" type="primary">rpsM</name>
    <name type="ordered locus">VP0279</name>
</gene>
<proteinExistence type="inferred from homology"/>